<feature type="chain" id="PRO_1000010072" description="DNA mismatch repair protein MutL">
    <location>
        <begin position="1"/>
        <end position="618"/>
    </location>
</feature>
<feature type="region of interest" description="Disordered" evidence="2">
    <location>
        <begin position="367"/>
        <end position="402"/>
    </location>
</feature>
<feature type="compositionally biased region" description="Low complexity" evidence="2">
    <location>
        <begin position="367"/>
        <end position="378"/>
    </location>
</feature>
<feature type="compositionally biased region" description="Gly residues" evidence="2">
    <location>
        <begin position="382"/>
        <end position="392"/>
    </location>
</feature>
<name>MUTL_SALCH</name>
<organism>
    <name type="scientific">Salmonella choleraesuis (strain SC-B67)</name>
    <dbReference type="NCBI Taxonomy" id="321314"/>
    <lineage>
        <taxon>Bacteria</taxon>
        <taxon>Pseudomonadati</taxon>
        <taxon>Pseudomonadota</taxon>
        <taxon>Gammaproteobacteria</taxon>
        <taxon>Enterobacterales</taxon>
        <taxon>Enterobacteriaceae</taxon>
        <taxon>Salmonella</taxon>
    </lineage>
</organism>
<sequence length="618" mass="67783">MPIQVLPPQLANQIAAGEVVERPASVVKELVENSLDAGATRVDIDIERGGAKLIRIRDNGCGIKKEELALALARHATSKIASLDDLEAIISLGFRGEALASISSVSRLTLTSRTAEQAEAWQAYAEGRDMDVTVKPAAHPVGTTLEVLDLFYNTPARRKFMRTEKTEFNHIDEIIRRIALARFDVTLNLSHNGKLVRQYRAVAKDGQKERRLGAICGTPFLEQALAIEWQHGDLTLRGWVADPNHTTTALTEIQYCYVNGRMMRDRLINHAIRQACEDKLGADQQPAFVLYLEIDPHQVDVNVHPAKHEVRFHQSRLVHDFIYQGVLSVLQQQTETTLPLEEIAPAPRHVPENRIAAGRNHFAVPAEPTAAREPATPRYSGGASGGNGGRQTAGGWPHAQPGYQKQQGEVYRALLQTPTTSPVPEPVAPALDGHSQSFGRVLTIVGGDCALLEHAGTIQLLSLPVAERWLRQAQLTPGQSPVCAQPLLIPLRLKVSADEKAALQQAQSLLGELGIEFQSDAQHVTIRAVPLPLRQQNLQILIPELIGYLAQQTTFATVNIAQWIARNVQSEHPQWSMAQAISLLADVERLCPQLVKAPPGGLLQPVDLHSAMNALKHE</sequence>
<reference key="1">
    <citation type="journal article" date="2005" name="Nucleic Acids Res.">
        <title>The genome sequence of Salmonella enterica serovar Choleraesuis, a highly invasive and resistant zoonotic pathogen.</title>
        <authorList>
            <person name="Chiu C.-H."/>
            <person name="Tang P."/>
            <person name="Chu C."/>
            <person name="Hu S."/>
            <person name="Bao Q."/>
            <person name="Yu J."/>
            <person name="Chou Y.-Y."/>
            <person name="Wang H.-S."/>
            <person name="Lee Y.-S."/>
        </authorList>
    </citation>
    <scope>NUCLEOTIDE SEQUENCE [LARGE SCALE GENOMIC DNA]</scope>
    <source>
        <strain>SC-B67</strain>
    </source>
</reference>
<proteinExistence type="inferred from homology"/>
<evidence type="ECO:0000255" key="1">
    <source>
        <dbReference type="HAMAP-Rule" id="MF_00149"/>
    </source>
</evidence>
<evidence type="ECO:0000256" key="2">
    <source>
        <dbReference type="SAM" id="MobiDB-lite"/>
    </source>
</evidence>
<comment type="function">
    <text evidence="1">This protein is involved in the repair of mismatches in DNA. It is required for dam-dependent methyl-directed DNA mismatch repair. May act as a 'molecular matchmaker', a protein that promotes the formation of a stable complex between two or more DNA-binding proteins in an ATP-dependent manner without itself being part of a final effector complex.</text>
</comment>
<comment type="similarity">
    <text evidence="1">Belongs to the DNA mismatch repair MutL/HexB family.</text>
</comment>
<protein>
    <recommendedName>
        <fullName evidence="1">DNA mismatch repair protein MutL</fullName>
    </recommendedName>
</protein>
<dbReference type="EMBL" id="AE017220">
    <property type="protein sequence ID" value="AAX68141.1"/>
    <property type="molecule type" value="Genomic_DNA"/>
</dbReference>
<dbReference type="RefSeq" id="WP_001122559.1">
    <property type="nucleotide sequence ID" value="NC_006905.1"/>
</dbReference>
<dbReference type="SMR" id="Q57GM1"/>
<dbReference type="KEGG" id="sec:SCH_4235"/>
<dbReference type="HOGENOM" id="CLU_004131_5_1_6"/>
<dbReference type="Proteomes" id="UP000000538">
    <property type="component" value="Chromosome"/>
</dbReference>
<dbReference type="GO" id="GO:0032300">
    <property type="term" value="C:mismatch repair complex"/>
    <property type="evidence" value="ECO:0007669"/>
    <property type="project" value="InterPro"/>
</dbReference>
<dbReference type="GO" id="GO:0005524">
    <property type="term" value="F:ATP binding"/>
    <property type="evidence" value="ECO:0007669"/>
    <property type="project" value="InterPro"/>
</dbReference>
<dbReference type="GO" id="GO:0016887">
    <property type="term" value="F:ATP hydrolysis activity"/>
    <property type="evidence" value="ECO:0007669"/>
    <property type="project" value="InterPro"/>
</dbReference>
<dbReference type="GO" id="GO:0140664">
    <property type="term" value="F:ATP-dependent DNA damage sensor activity"/>
    <property type="evidence" value="ECO:0007669"/>
    <property type="project" value="InterPro"/>
</dbReference>
<dbReference type="GO" id="GO:0030983">
    <property type="term" value="F:mismatched DNA binding"/>
    <property type="evidence" value="ECO:0007669"/>
    <property type="project" value="InterPro"/>
</dbReference>
<dbReference type="GO" id="GO:0006298">
    <property type="term" value="P:mismatch repair"/>
    <property type="evidence" value="ECO:0007669"/>
    <property type="project" value="UniProtKB-UniRule"/>
</dbReference>
<dbReference type="CDD" id="cd16926">
    <property type="entry name" value="HATPase_MutL-MLH-PMS-like"/>
    <property type="match status" value="1"/>
</dbReference>
<dbReference type="CDD" id="cd03482">
    <property type="entry name" value="MutL_Trans_MutL"/>
    <property type="match status" value="1"/>
</dbReference>
<dbReference type="FunFam" id="3.30.230.10:FF:000013">
    <property type="entry name" value="DNA mismatch repair endonuclease MutL"/>
    <property type="match status" value="1"/>
</dbReference>
<dbReference type="FunFam" id="3.30.565.10:FF:000003">
    <property type="entry name" value="DNA mismatch repair endonuclease MutL"/>
    <property type="match status" value="1"/>
</dbReference>
<dbReference type="FunFam" id="3.30.1370.100:FF:000002">
    <property type="entry name" value="DNA mismatch repair protein MutL"/>
    <property type="match status" value="1"/>
</dbReference>
<dbReference type="Gene3D" id="3.30.230.10">
    <property type="match status" value="1"/>
</dbReference>
<dbReference type="Gene3D" id="3.30.565.10">
    <property type="entry name" value="Histidine kinase-like ATPase, C-terminal domain"/>
    <property type="match status" value="1"/>
</dbReference>
<dbReference type="Gene3D" id="3.30.1540.20">
    <property type="entry name" value="MutL, C-terminal domain, dimerisation subdomain"/>
    <property type="match status" value="1"/>
</dbReference>
<dbReference type="Gene3D" id="3.30.1370.100">
    <property type="entry name" value="MutL, C-terminal domain, regulatory subdomain"/>
    <property type="match status" value="1"/>
</dbReference>
<dbReference type="HAMAP" id="MF_00149">
    <property type="entry name" value="DNA_mis_repair"/>
    <property type="match status" value="1"/>
</dbReference>
<dbReference type="InterPro" id="IPR014762">
    <property type="entry name" value="DNA_mismatch_repair_CS"/>
</dbReference>
<dbReference type="InterPro" id="IPR020667">
    <property type="entry name" value="DNA_mismatch_repair_MutL"/>
</dbReference>
<dbReference type="InterPro" id="IPR013507">
    <property type="entry name" value="DNA_mismatch_S5_2-like"/>
</dbReference>
<dbReference type="InterPro" id="IPR036890">
    <property type="entry name" value="HATPase_C_sf"/>
</dbReference>
<dbReference type="InterPro" id="IPR002099">
    <property type="entry name" value="MutL/Mlh/PMS"/>
</dbReference>
<dbReference type="InterPro" id="IPR038973">
    <property type="entry name" value="MutL/Mlh/Pms-like"/>
</dbReference>
<dbReference type="InterPro" id="IPR014790">
    <property type="entry name" value="MutL_C"/>
</dbReference>
<dbReference type="InterPro" id="IPR042120">
    <property type="entry name" value="MutL_C_dimsub"/>
</dbReference>
<dbReference type="InterPro" id="IPR042121">
    <property type="entry name" value="MutL_C_regsub"/>
</dbReference>
<dbReference type="InterPro" id="IPR037198">
    <property type="entry name" value="MutL_C_sf"/>
</dbReference>
<dbReference type="InterPro" id="IPR020568">
    <property type="entry name" value="Ribosomal_Su5_D2-typ_SF"/>
</dbReference>
<dbReference type="InterPro" id="IPR014721">
    <property type="entry name" value="Ribsml_uS5_D2-typ_fold_subgr"/>
</dbReference>
<dbReference type="NCBIfam" id="TIGR00585">
    <property type="entry name" value="mutl"/>
    <property type="match status" value="1"/>
</dbReference>
<dbReference type="NCBIfam" id="NF000948">
    <property type="entry name" value="PRK00095.1-1"/>
    <property type="match status" value="1"/>
</dbReference>
<dbReference type="PANTHER" id="PTHR10073">
    <property type="entry name" value="DNA MISMATCH REPAIR PROTEIN MLH, PMS, MUTL"/>
    <property type="match status" value="1"/>
</dbReference>
<dbReference type="PANTHER" id="PTHR10073:SF12">
    <property type="entry name" value="DNA MISMATCH REPAIR PROTEIN MLH1"/>
    <property type="match status" value="1"/>
</dbReference>
<dbReference type="Pfam" id="PF01119">
    <property type="entry name" value="DNA_mis_repair"/>
    <property type="match status" value="1"/>
</dbReference>
<dbReference type="Pfam" id="PF13589">
    <property type="entry name" value="HATPase_c_3"/>
    <property type="match status" value="1"/>
</dbReference>
<dbReference type="Pfam" id="PF08676">
    <property type="entry name" value="MutL_C"/>
    <property type="match status" value="1"/>
</dbReference>
<dbReference type="SMART" id="SM01340">
    <property type="entry name" value="DNA_mis_repair"/>
    <property type="match status" value="1"/>
</dbReference>
<dbReference type="SMART" id="SM00853">
    <property type="entry name" value="MutL_C"/>
    <property type="match status" value="1"/>
</dbReference>
<dbReference type="SUPFAM" id="SSF55874">
    <property type="entry name" value="ATPase domain of HSP90 chaperone/DNA topoisomerase II/histidine kinase"/>
    <property type="match status" value="1"/>
</dbReference>
<dbReference type="SUPFAM" id="SSF118116">
    <property type="entry name" value="DNA mismatch repair protein MutL"/>
    <property type="match status" value="1"/>
</dbReference>
<dbReference type="SUPFAM" id="SSF54211">
    <property type="entry name" value="Ribosomal protein S5 domain 2-like"/>
    <property type="match status" value="1"/>
</dbReference>
<dbReference type="PROSITE" id="PS00058">
    <property type="entry name" value="DNA_MISMATCH_REPAIR_1"/>
    <property type="match status" value="1"/>
</dbReference>
<keyword id="KW-0227">DNA damage</keyword>
<keyword id="KW-0234">DNA repair</keyword>
<accession>Q57GM1</accession>
<gene>
    <name evidence="1" type="primary">mutL</name>
    <name type="ordered locus">SCH_4235</name>
</gene>